<comment type="function">
    <text evidence="1 5 6 9">Multicopper oxidase; part of the gene cluster that mediates the biosynthesis of cercosporin, a light-activated, non-host-selective toxin (PubMed:29844193). The perylenequinone chromophore of cercosporin absorbs light energy to attain an electronically-activated triplet state and produces active oxygen species such as the hydroxyl radical, superoxide, hydrogen peroxide or singlet oxygen upon reaction with oxygen molecules (PubMed:11701851). These reactive oxygen species cause damage to various cellular components including lipids, proteins and nucleic acids (PubMed:11701851). The first step of cercosporin biosynthesis is performed by the polyketide synthase CTB1 which catalyzes the formation of nor-toralactone (Probable). The starter unit acyltransferase (SAT) domain of CTB1 initiates polyketide extension by the selective utilization of acetyl-CoA, which is elongated to the heptaketide in the beta-ketoacyl synthase (KS) domain by successive condensations with six malonyl units introduced by the malonyl acyltransferase (MAT) domain. The product template (PT) domain catalyzes C4-C9 and C2-C11 aldol cyclizations and dehydrations to a trihydroxynaphthalene, which is thought to be delivered to the thioesterase (TE) domain for product release (Probable). The bifunctional enzyme CTB3 then methylates nor-toralactone to toralactone before conducting an unusual oxidative aromatic ring opening (Probable). The O-methyltransferase CTB2 further methylates the nascent OH-6 of the CBT3 product, blocking further oxidation at this site before the reductase CTB6 reduces the 2-oxopropyl ketone at position C7, giving naphthalene (Probable). The FAD-dependent monooxygenase CTB5 in concert with the multicopper oxidase CTB12 are responsible for homodimerization of naphthalene with CTB7 installing the dioxepine moiety, finally producing cercosporin (Probable). The fasciclin domain-containing protein CTB11 might act with CTB5 and CTB12 whereas the roles of CTB9 and CTB10 have still to be elucidated (By similarity).</text>
</comment>
<comment type="pathway">
    <text evidence="5">Mycotoxin biosynthesis.</text>
</comment>
<comment type="disruption phenotype">
    <text evidence="5">Abolishes the production of cercosporin.</text>
</comment>
<comment type="similarity">
    <text evidence="8">Belongs to the multicopper oxidase family.</text>
</comment>
<reference key="1">
    <citation type="journal article" date="2018" name="Proc. Natl. Acad. Sci. U.S.A.">
        <title>Gene cluster conservation provides insight into cercosporin biosynthesis and extends production to the genus Colletotrichum.</title>
        <authorList>
            <person name="de Jonge R."/>
            <person name="Ebert M.K."/>
            <person name="Huitt-Roehl C.R."/>
            <person name="Pal P."/>
            <person name="Suttle J.C."/>
            <person name="Spanner R.E."/>
            <person name="Neubauer J.D."/>
            <person name="Jurick W.M. II"/>
            <person name="Stott K.A."/>
            <person name="Secor G.A."/>
            <person name="Thomma B.P.H.J."/>
            <person name="Van de Peer Y."/>
            <person name="Townsend C.A."/>
            <person name="Bolton M.D."/>
        </authorList>
    </citation>
    <scope>NUCLEOTIDE SEQUENCE [LARGE SCALE GENOMIC DNA]</scope>
    <scope>FUNCTION</scope>
    <scope>DISRUPTION PHENOTYPE</scope>
    <scope>PATHWAY</scope>
    <source>
        <strain>09-40</strain>
    </source>
</reference>
<reference key="2">
    <citation type="journal article" date="2000" name="Annu. Rev. Phytopathol.">
        <title>The photoactivated cercospora toxin cercosporin: contributions to plant disease and fundamental biology.</title>
        <authorList>
            <person name="Daub M.E."/>
            <person name="Ehrenshaft M."/>
        </authorList>
    </citation>
    <scope>REVIEW ON CERCOSPORIN</scope>
</reference>
<accession>A0A2G5I8N8</accession>
<protein>
    <recommendedName>
        <fullName evidence="7">Multicopper oxidase CTB12</fullName>
        <ecNumber evidence="9">1.-.-.-</ecNumber>
    </recommendedName>
    <alternativeName>
        <fullName evidence="7">Cercosporin toxin biosynthesis cluster protein 12</fullName>
    </alternativeName>
    <alternativeName>
        <fullName evidence="7">Laccase CTB12</fullName>
    </alternativeName>
</protein>
<dbReference type="EC" id="1.-.-.-" evidence="9"/>
<dbReference type="EMBL" id="LKMD01000100">
    <property type="protein sequence ID" value="PIB01155.1"/>
    <property type="molecule type" value="Genomic_DNA"/>
</dbReference>
<dbReference type="RefSeq" id="XP_023458816.1">
    <property type="nucleotide sequence ID" value="XM_023593487.1"/>
</dbReference>
<dbReference type="SMR" id="A0A2G5I8N8"/>
<dbReference type="GlyCosmos" id="A0A2G5I8N8">
    <property type="glycosylation" value="4 sites, No reported glycans"/>
</dbReference>
<dbReference type="GeneID" id="35424657"/>
<dbReference type="OrthoDB" id="2121828at2759"/>
<dbReference type="Proteomes" id="UP000230605">
    <property type="component" value="Chromosome 1"/>
</dbReference>
<dbReference type="GO" id="GO:0005507">
    <property type="term" value="F:copper ion binding"/>
    <property type="evidence" value="ECO:0007669"/>
    <property type="project" value="InterPro"/>
</dbReference>
<dbReference type="GO" id="GO:0016491">
    <property type="term" value="F:oxidoreductase activity"/>
    <property type="evidence" value="ECO:0007669"/>
    <property type="project" value="UniProtKB-KW"/>
</dbReference>
<dbReference type="CDD" id="cd13850">
    <property type="entry name" value="CuRO_1_Abr2_like"/>
    <property type="match status" value="1"/>
</dbReference>
<dbReference type="CDD" id="cd13898">
    <property type="entry name" value="CuRO_3_Abr2_like"/>
    <property type="match status" value="1"/>
</dbReference>
<dbReference type="Gene3D" id="2.60.40.420">
    <property type="entry name" value="Cupredoxins - blue copper proteins"/>
    <property type="match status" value="3"/>
</dbReference>
<dbReference type="InterPro" id="IPR011707">
    <property type="entry name" value="Cu-oxidase-like_N"/>
</dbReference>
<dbReference type="InterPro" id="IPR001117">
    <property type="entry name" value="Cu-oxidase_2nd"/>
</dbReference>
<dbReference type="InterPro" id="IPR011706">
    <property type="entry name" value="Cu-oxidase_C"/>
</dbReference>
<dbReference type="InterPro" id="IPR045087">
    <property type="entry name" value="Cu-oxidase_fam"/>
</dbReference>
<dbReference type="InterPro" id="IPR033138">
    <property type="entry name" value="Cu_oxidase_CS"/>
</dbReference>
<dbReference type="InterPro" id="IPR002355">
    <property type="entry name" value="Cu_oxidase_Cu_BS"/>
</dbReference>
<dbReference type="InterPro" id="IPR008972">
    <property type="entry name" value="Cupredoxin"/>
</dbReference>
<dbReference type="PANTHER" id="PTHR11709:SF488">
    <property type="entry name" value="LACCASE-RELATED"/>
    <property type="match status" value="1"/>
</dbReference>
<dbReference type="PANTHER" id="PTHR11709">
    <property type="entry name" value="MULTI-COPPER OXIDASE"/>
    <property type="match status" value="1"/>
</dbReference>
<dbReference type="Pfam" id="PF00394">
    <property type="entry name" value="Cu-oxidase"/>
    <property type="match status" value="1"/>
</dbReference>
<dbReference type="Pfam" id="PF07731">
    <property type="entry name" value="Cu-oxidase_2"/>
    <property type="match status" value="1"/>
</dbReference>
<dbReference type="Pfam" id="PF07732">
    <property type="entry name" value="Cu-oxidase_3"/>
    <property type="match status" value="1"/>
</dbReference>
<dbReference type="SUPFAM" id="SSF49503">
    <property type="entry name" value="Cupredoxins"/>
    <property type="match status" value="3"/>
</dbReference>
<dbReference type="PROSITE" id="PS00079">
    <property type="entry name" value="MULTICOPPER_OXIDASE1"/>
    <property type="match status" value="1"/>
</dbReference>
<dbReference type="PROSITE" id="PS00080">
    <property type="entry name" value="MULTICOPPER_OXIDASE2"/>
    <property type="match status" value="1"/>
</dbReference>
<sequence length="636" mass="70180">MWSVRLYPLALTLLFQCVSPAAARPSGCVDDVEVVQEIGSKEIQAPVVRFEISLTTQSIDAAGIGFREAIFINDAFIGPTLYAKQGDRIEFVVHNYMQQDTSIHFHGIDQRSTPWSDGVPGLTQSQIRPGASFLYNWTAHDAGTYFYHSHAKSQMMDGLYGAVVIAPDDEAPRPFHLISSGEADQAAMLAAEKLMRPIFVSDWSQYTSAEYHGIQHAANIDFSCMDSILVQGVGSQYCLSEEELDDMTNPIVLQLLKELAGGHMTPKGCIPPLQMFNGDFELHLENVPELAYNKCKGGQSSKGNYTIDVDTSIGWAALTFVNPGGLYPLQLSIDSHELYVYAVDGQYVYPIVADRVLVNTGSRISVMIKLDQEKARHVVRVANDYLNQILGGFAELAYDGATNAPKHPHPKTNYGGKLISSEMVSFVPEDSSPYPALRPAQSADSTFKLRLKKLGQPYRAYEWTQTGSLGYNISHEHDDPPLLLQNVEDVPATELTLKTQIGDWVDLVLVTAGPFAQAHPMHKHGNKVFLIGSGSGSFPWESVEEAIPHLPEGTFNFQDPPYLDTFNTVEMEGQANDTWTAVRYKAEYAGAWLFHCHVQTHLSGGMGMVVLDGVDAWPEVPLAYQEWNGFEPPALS</sequence>
<keyword id="KW-0186">Copper</keyword>
<keyword id="KW-0325">Glycoprotein</keyword>
<keyword id="KW-0479">Metal-binding</keyword>
<keyword id="KW-0560">Oxidoreductase</keyword>
<keyword id="KW-0677">Repeat</keyword>
<keyword id="KW-0732">Signal</keyword>
<organism>
    <name type="scientific">Cercospora beticola</name>
    <name type="common">Sugarbeet leaf spot fungus</name>
    <dbReference type="NCBI Taxonomy" id="122368"/>
    <lineage>
        <taxon>Eukaryota</taxon>
        <taxon>Fungi</taxon>
        <taxon>Dikarya</taxon>
        <taxon>Ascomycota</taxon>
        <taxon>Pezizomycotina</taxon>
        <taxon>Dothideomycetes</taxon>
        <taxon>Dothideomycetidae</taxon>
        <taxon>Mycosphaerellales</taxon>
        <taxon>Mycosphaerellaceae</taxon>
        <taxon>Cercospora</taxon>
    </lineage>
</organism>
<gene>
    <name evidence="7" type="primary">CTB12</name>
    <name type="ORF">CB0940_00845</name>
</gene>
<name>CTB12_CERBT</name>
<evidence type="ECO:0000250" key="1">
    <source>
        <dbReference type="UniProtKB" id="Q0UHZ9"/>
    </source>
</evidence>
<evidence type="ECO:0000250" key="2">
    <source>
        <dbReference type="UniProtKB" id="Q70KY3"/>
    </source>
</evidence>
<evidence type="ECO:0000255" key="3"/>
<evidence type="ECO:0000255" key="4">
    <source>
        <dbReference type="PROSITE-ProRule" id="PRU00498"/>
    </source>
</evidence>
<evidence type="ECO:0000269" key="5">
    <source>
    </source>
</evidence>
<evidence type="ECO:0000303" key="6">
    <source>
    </source>
</evidence>
<evidence type="ECO:0000303" key="7">
    <source>
    </source>
</evidence>
<evidence type="ECO:0000305" key="8"/>
<evidence type="ECO:0000305" key="9">
    <source>
    </source>
</evidence>
<proteinExistence type="inferred from homology"/>
<feature type="signal peptide" evidence="3">
    <location>
        <begin position="1"/>
        <end position="23"/>
    </location>
</feature>
<feature type="chain" id="PRO_5013929045" description="Multicopper oxidase CTB12">
    <location>
        <begin position="24"/>
        <end position="636"/>
    </location>
</feature>
<feature type="domain" description="Plastocyanin-like 1" evidence="3">
    <location>
        <begin position="62"/>
        <end position="168"/>
    </location>
</feature>
<feature type="domain" description="Plastocyanin-like 2" evidence="3">
    <location>
        <begin position="318"/>
        <end position="381"/>
    </location>
</feature>
<feature type="domain" description="Plastocyanin-like 3" evidence="3">
    <location>
        <begin position="486"/>
        <end position="613"/>
    </location>
</feature>
<feature type="binding site" evidence="2">
    <location>
        <position position="104"/>
    </location>
    <ligand>
        <name>Cu cation</name>
        <dbReference type="ChEBI" id="CHEBI:23378"/>
        <label>1</label>
    </ligand>
</feature>
<feature type="binding site" evidence="2">
    <location>
        <position position="106"/>
    </location>
    <ligand>
        <name>Cu cation</name>
        <dbReference type="ChEBI" id="CHEBI:23378"/>
        <label>2</label>
    </ligand>
</feature>
<feature type="binding site" evidence="2">
    <location>
        <position position="148"/>
    </location>
    <ligand>
        <name>Cu cation</name>
        <dbReference type="ChEBI" id="CHEBI:23378"/>
        <label>2</label>
    </ligand>
</feature>
<feature type="binding site" evidence="2">
    <location>
        <position position="150"/>
    </location>
    <ligand>
        <name>Cu cation</name>
        <dbReference type="ChEBI" id="CHEBI:23378"/>
        <label>3</label>
    </ligand>
</feature>
<feature type="binding site" evidence="2">
    <location>
        <position position="519"/>
    </location>
    <ligand>
        <name>Cu cation</name>
        <dbReference type="ChEBI" id="CHEBI:23378"/>
        <label>4</label>
    </ligand>
</feature>
<feature type="binding site" evidence="2">
    <location>
        <position position="522"/>
    </location>
    <ligand>
        <name>Cu cation</name>
        <dbReference type="ChEBI" id="CHEBI:23378"/>
        <label>1</label>
    </ligand>
</feature>
<feature type="binding site" evidence="2">
    <location>
        <position position="524"/>
    </location>
    <ligand>
        <name>Cu cation</name>
        <dbReference type="ChEBI" id="CHEBI:23378"/>
        <label>3</label>
    </ligand>
</feature>
<feature type="binding site" evidence="2">
    <location>
        <position position="595"/>
    </location>
    <ligand>
        <name>Cu cation</name>
        <dbReference type="ChEBI" id="CHEBI:23378"/>
        <label>3</label>
    </ligand>
</feature>
<feature type="binding site" evidence="2">
    <location>
        <position position="596"/>
    </location>
    <ligand>
        <name>Cu cation</name>
        <dbReference type="ChEBI" id="CHEBI:23378"/>
        <label>4</label>
    </ligand>
</feature>
<feature type="binding site" evidence="2">
    <location>
        <position position="597"/>
    </location>
    <ligand>
        <name>Cu cation</name>
        <dbReference type="ChEBI" id="CHEBI:23378"/>
        <label>2</label>
    </ligand>
</feature>
<feature type="binding site" evidence="2">
    <location>
        <position position="601"/>
    </location>
    <ligand>
        <name>Cu cation</name>
        <dbReference type="ChEBI" id="CHEBI:23378"/>
        <label>4</label>
    </ligand>
</feature>
<feature type="glycosylation site" description="N-linked (GlcNAc...) asparagine" evidence="4">
    <location>
        <position position="136"/>
    </location>
</feature>
<feature type="glycosylation site" description="N-linked (GlcNAc...) asparagine" evidence="4">
    <location>
        <position position="304"/>
    </location>
</feature>
<feature type="glycosylation site" description="N-linked (GlcNAc...) asparagine" evidence="4">
    <location>
        <position position="472"/>
    </location>
</feature>
<feature type="glycosylation site" description="N-linked (GlcNAc...) asparagine" evidence="4">
    <location>
        <position position="576"/>
    </location>
</feature>